<reference key="1">
    <citation type="journal article" date="2007" name="Proc. Natl. Acad. Sci. U.S.A.">
        <title>The genome of Syntrophus aciditrophicus: life at the thermodynamic limit of microbial growth.</title>
        <authorList>
            <person name="McInerney M.J."/>
            <person name="Rohlin L."/>
            <person name="Mouttaki H."/>
            <person name="Kim U."/>
            <person name="Krupp R.S."/>
            <person name="Rios-Hernandez L."/>
            <person name="Sieber J."/>
            <person name="Struchtemeyer C.G."/>
            <person name="Bhattacharyya A."/>
            <person name="Campbell J.W."/>
            <person name="Gunsalus R.P."/>
        </authorList>
    </citation>
    <scope>NUCLEOTIDE SEQUENCE [LARGE SCALE GENOMIC DNA]</scope>
    <source>
        <strain>SB</strain>
    </source>
</reference>
<name>EFP_SYNAS</name>
<proteinExistence type="inferred from homology"/>
<comment type="function">
    <text evidence="1">Involved in peptide bond synthesis. Stimulates efficient translation and peptide-bond synthesis on native or reconstituted 70S ribosomes in vitro. Probably functions indirectly by altering the affinity of the ribosome for aminoacyl-tRNA, thus increasing their reactivity as acceptors for peptidyl transferase.</text>
</comment>
<comment type="pathway">
    <text evidence="1">Protein biosynthesis; polypeptide chain elongation.</text>
</comment>
<comment type="subcellular location">
    <subcellularLocation>
        <location evidence="1">Cytoplasm</location>
    </subcellularLocation>
</comment>
<comment type="similarity">
    <text evidence="1">Belongs to the elongation factor P family.</text>
</comment>
<organism>
    <name type="scientific">Syntrophus aciditrophicus (strain SB)</name>
    <dbReference type="NCBI Taxonomy" id="56780"/>
    <lineage>
        <taxon>Bacteria</taxon>
        <taxon>Pseudomonadati</taxon>
        <taxon>Thermodesulfobacteriota</taxon>
        <taxon>Syntrophia</taxon>
        <taxon>Syntrophales</taxon>
        <taxon>Syntrophaceae</taxon>
        <taxon>Syntrophus</taxon>
    </lineage>
</organism>
<protein>
    <recommendedName>
        <fullName evidence="1">Elongation factor P</fullName>
        <shortName evidence="1">EF-P</shortName>
    </recommendedName>
</protein>
<gene>
    <name evidence="1" type="primary">efp</name>
    <name type="ordered locus">SYNAS_08700</name>
    <name type="ORF">SYN_00183</name>
</gene>
<evidence type="ECO:0000255" key="1">
    <source>
        <dbReference type="HAMAP-Rule" id="MF_00141"/>
    </source>
</evidence>
<dbReference type="EMBL" id="CP000252">
    <property type="protein sequence ID" value="ABC76749.1"/>
    <property type="molecule type" value="Genomic_DNA"/>
</dbReference>
<dbReference type="RefSeq" id="WP_011416782.1">
    <property type="nucleotide sequence ID" value="NC_007759.1"/>
</dbReference>
<dbReference type="SMR" id="Q2LRN9"/>
<dbReference type="FunCoup" id="Q2LRN9">
    <property type="interactions" value="501"/>
</dbReference>
<dbReference type="STRING" id="56780.SYN_00183"/>
<dbReference type="KEGG" id="sat:SYN_00183"/>
<dbReference type="eggNOG" id="COG0231">
    <property type="taxonomic scope" value="Bacteria"/>
</dbReference>
<dbReference type="HOGENOM" id="CLU_074944_0_1_7"/>
<dbReference type="InParanoid" id="Q2LRN9"/>
<dbReference type="OrthoDB" id="9801844at2"/>
<dbReference type="UniPathway" id="UPA00345"/>
<dbReference type="Proteomes" id="UP000001933">
    <property type="component" value="Chromosome"/>
</dbReference>
<dbReference type="GO" id="GO:0005737">
    <property type="term" value="C:cytoplasm"/>
    <property type="evidence" value="ECO:0007669"/>
    <property type="project" value="UniProtKB-SubCell"/>
</dbReference>
<dbReference type="GO" id="GO:0003746">
    <property type="term" value="F:translation elongation factor activity"/>
    <property type="evidence" value="ECO:0007669"/>
    <property type="project" value="UniProtKB-UniRule"/>
</dbReference>
<dbReference type="GO" id="GO:0043043">
    <property type="term" value="P:peptide biosynthetic process"/>
    <property type="evidence" value="ECO:0007669"/>
    <property type="project" value="InterPro"/>
</dbReference>
<dbReference type="CDD" id="cd04470">
    <property type="entry name" value="S1_EF-P_repeat_1"/>
    <property type="match status" value="1"/>
</dbReference>
<dbReference type="CDD" id="cd05794">
    <property type="entry name" value="S1_EF-P_repeat_2"/>
    <property type="match status" value="1"/>
</dbReference>
<dbReference type="FunFam" id="2.30.30.30:FF:000003">
    <property type="entry name" value="Elongation factor P"/>
    <property type="match status" value="1"/>
</dbReference>
<dbReference type="FunFam" id="2.40.50.140:FF:000004">
    <property type="entry name" value="Elongation factor P"/>
    <property type="match status" value="1"/>
</dbReference>
<dbReference type="FunFam" id="2.40.50.140:FF:000009">
    <property type="entry name" value="Elongation factor P"/>
    <property type="match status" value="1"/>
</dbReference>
<dbReference type="Gene3D" id="2.30.30.30">
    <property type="match status" value="1"/>
</dbReference>
<dbReference type="Gene3D" id="2.40.50.140">
    <property type="entry name" value="Nucleic acid-binding proteins"/>
    <property type="match status" value="2"/>
</dbReference>
<dbReference type="HAMAP" id="MF_00141">
    <property type="entry name" value="EF_P"/>
    <property type="match status" value="1"/>
</dbReference>
<dbReference type="InterPro" id="IPR015365">
    <property type="entry name" value="Elong-fact-P_C"/>
</dbReference>
<dbReference type="InterPro" id="IPR012340">
    <property type="entry name" value="NA-bd_OB-fold"/>
</dbReference>
<dbReference type="InterPro" id="IPR014722">
    <property type="entry name" value="Rib_uL2_dom2"/>
</dbReference>
<dbReference type="InterPro" id="IPR020599">
    <property type="entry name" value="Transl_elong_fac_P/YeiP"/>
</dbReference>
<dbReference type="InterPro" id="IPR013185">
    <property type="entry name" value="Transl_elong_KOW-like"/>
</dbReference>
<dbReference type="InterPro" id="IPR001059">
    <property type="entry name" value="Transl_elong_P/YeiP_cen"/>
</dbReference>
<dbReference type="InterPro" id="IPR013852">
    <property type="entry name" value="Transl_elong_P/YeiP_CS"/>
</dbReference>
<dbReference type="InterPro" id="IPR011768">
    <property type="entry name" value="Transl_elongation_fac_P"/>
</dbReference>
<dbReference type="InterPro" id="IPR008991">
    <property type="entry name" value="Translation_prot_SH3-like_sf"/>
</dbReference>
<dbReference type="NCBIfam" id="TIGR00038">
    <property type="entry name" value="efp"/>
    <property type="match status" value="1"/>
</dbReference>
<dbReference type="NCBIfam" id="NF001810">
    <property type="entry name" value="PRK00529.1"/>
    <property type="match status" value="1"/>
</dbReference>
<dbReference type="PANTHER" id="PTHR30053">
    <property type="entry name" value="ELONGATION FACTOR P"/>
    <property type="match status" value="1"/>
</dbReference>
<dbReference type="PANTHER" id="PTHR30053:SF12">
    <property type="entry name" value="ELONGATION FACTOR P (EF-P) FAMILY PROTEIN"/>
    <property type="match status" value="1"/>
</dbReference>
<dbReference type="Pfam" id="PF01132">
    <property type="entry name" value="EFP"/>
    <property type="match status" value="1"/>
</dbReference>
<dbReference type="Pfam" id="PF08207">
    <property type="entry name" value="EFP_N"/>
    <property type="match status" value="1"/>
</dbReference>
<dbReference type="Pfam" id="PF09285">
    <property type="entry name" value="Elong-fact-P_C"/>
    <property type="match status" value="1"/>
</dbReference>
<dbReference type="PIRSF" id="PIRSF005901">
    <property type="entry name" value="EF-P"/>
    <property type="match status" value="1"/>
</dbReference>
<dbReference type="SMART" id="SM01185">
    <property type="entry name" value="EFP"/>
    <property type="match status" value="1"/>
</dbReference>
<dbReference type="SMART" id="SM00841">
    <property type="entry name" value="Elong-fact-P_C"/>
    <property type="match status" value="1"/>
</dbReference>
<dbReference type="SUPFAM" id="SSF50249">
    <property type="entry name" value="Nucleic acid-binding proteins"/>
    <property type="match status" value="2"/>
</dbReference>
<dbReference type="SUPFAM" id="SSF50104">
    <property type="entry name" value="Translation proteins SH3-like domain"/>
    <property type="match status" value="1"/>
</dbReference>
<dbReference type="PROSITE" id="PS01275">
    <property type="entry name" value="EFP"/>
    <property type="match status" value="1"/>
</dbReference>
<feature type="chain" id="PRO_1000010881" description="Elongation factor P">
    <location>
        <begin position="1"/>
        <end position="187"/>
    </location>
</feature>
<keyword id="KW-0963">Cytoplasm</keyword>
<keyword id="KW-0251">Elongation factor</keyword>
<keyword id="KW-0648">Protein biosynthesis</keyword>
<keyword id="KW-1185">Reference proteome</keyword>
<sequence length="187" mass="21472">MYSASDLRKNLRIKLEGDPYIITEFNFVKPGKGQALYRCKLKNMITGNQFERTFRSVDNFEAADLQEKKMQFLYTEEDRYCFMDNTSYEQIFLTADQVGDAAHFLIDNLEVEILLFEDKPLGISLPNFVDLVVTKADPWAKGDTVSGNTKPVTLQTGYQIMVPPFIEEGEKIRVDTRTGEYLTRVKG</sequence>
<accession>Q2LRN9</accession>